<feature type="chain" id="PRO_1000005097" description="Small ribosomal subunit protein bS21">
    <location>
        <begin position="1"/>
        <end position="77"/>
    </location>
</feature>
<feature type="region of interest" description="Disordered" evidence="2">
    <location>
        <begin position="38"/>
        <end position="77"/>
    </location>
</feature>
<feature type="compositionally biased region" description="Basic and acidic residues" evidence="2">
    <location>
        <begin position="38"/>
        <end position="52"/>
    </location>
</feature>
<feature type="compositionally biased region" description="Basic residues" evidence="2">
    <location>
        <begin position="53"/>
        <end position="62"/>
    </location>
</feature>
<reference key="1">
    <citation type="submission" date="2006-12" db="EMBL/GenBank/DDBJ databases">
        <authorList>
            <person name="Hendrix L."/>
            <person name="Mohamoud Y."/>
            <person name="Radune D."/>
            <person name="Shvartsbeyn A."/>
            <person name="Daugherty S."/>
            <person name="Dodson R."/>
            <person name="Durkin A.S."/>
            <person name="Harkins D."/>
            <person name="Huot H."/>
            <person name="Kothari S.P."/>
            <person name="Madupu R."/>
            <person name="Li J."/>
            <person name="Nelson W.C."/>
            <person name="Shrivastava S."/>
            <person name="Giglio M.G."/>
            <person name="Haft D."/>
            <person name="Selengut J."/>
            <person name="Fraser-Ligget C."/>
            <person name="Seshadri R."/>
        </authorList>
    </citation>
    <scope>NUCLEOTIDE SEQUENCE [LARGE SCALE GENOMIC DNA]</scope>
    <source>
        <strain>ATCC 35685 / KC583 / Herrer 020/F12,63</strain>
    </source>
</reference>
<gene>
    <name evidence="1" type="primary">rpsU</name>
    <name type="ordered locus">BARBAKC583_0302</name>
</gene>
<accession>A1URM1</accession>
<proteinExistence type="inferred from homology"/>
<comment type="similarity">
    <text evidence="1">Belongs to the bacterial ribosomal protein bS21 family.</text>
</comment>
<name>RS21_BARBK</name>
<protein>
    <recommendedName>
        <fullName evidence="1">Small ribosomal subunit protein bS21</fullName>
    </recommendedName>
    <alternativeName>
        <fullName evidence="3">30S ribosomal protein S21</fullName>
    </alternativeName>
</protein>
<organism>
    <name type="scientific">Bartonella bacilliformis (strain ATCC 35685 / KC583 / Herrer 020/F12,63)</name>
    <dbReference type="NCBI Taxonomy" id="360095"/>
    <lineage>
        <taxon>Bacteria</taxon>
        <taxon>Pseudomonadati</taxon>
        <taxon>Pseudomonadota</taxon>
        <taxon>Alphaproteobacteria</taxon>
        <taxon>Hyphomicrobiales</taxon>
        <taxon>Bartonellaceae</taxon>
        <taxon>Bartonella</taxon>
    </lineage>
</organism>
<dbReference type="EMBL" id="CP000524">
    <property type="protein sequence ID" value="ABM45063.1"/>
    <property type="molecule type" value="Genomic_DNA"/>
</dbReference>
<dbReference type="RefSeq" id="WP_005766206.1">
    <property type="nucleotide sequence ID" value="NC_008783.1"/>
</dbReference>
<dbReference type="SMR" id="A1URM1"/>
<dbReference type="STRING" id="360095.BARBAKC583_0302"/>
<dbReference type="GeneID" id="4684094"/>
<dbReference type="KEGG" id="bbk:BARBAKC583_0302"/>
<dbReference type="PATRIC" id="fig|360095.6.peg.289"/>
<dbReference type="eggNOG" id="COG0828">
    <property type="taxonomic scope" value="Bacteria"/>
</dbReference>
<dbReference type="HOGENOM" id="CLU_159258_0_1_5"/>
<dbReference type="OrthoDB" id="9811907at2"/>
<dbReference type="Proteomes" id="UP000000643">
    <property type="component" value="Chromosome"/>
</dbReference>
<dbReference type="GO" id="GO:1990904">
    <property type="term" value="C:ribonucleoprotein complex"/>
    <property type="evidence" value="ECO:0007669"/>
    <property type="project" value="UniProtKB-KW"/>
</dbReference>
<dbReference type="GO" id="GO:0005840">
    <property type="term" value="C:ribosome"/>
    <property type="evidence" value="ECO:0007669"/>
    <property type="project" value="UniProtKB-KW"/>
</dbReference>
<dbReference type="GO" id="GO:0003735">
    <property type="term" value="F:structural constituent of ribosome"/>
    <property type="evidence" value="ECO:0007669"/>
    <property type="project" value="InterPro"/>
</dbReference>
<dbReference type="GO" id="GO:0006412">
    <property type="term" value="P:translation"/>
    <property type="evidence" value="ECO:0007669"/>
    <property type="project" value="UniProtKB-UniRule"/>
</dbReference>
<dbReference type="Gene3D" id="1.20.5.1150">
    <property type="entry name" value="Ribosomal protein S8"/>
    <property type="match status" value="1"/>
</dbReference>
<dbReference type="HAMAP" id="MF_00358">
    <property type="entry name" value="Ribosomal_bS21"/>
    <property type="match status" value="1"/>
</dbReference>
<dbReference type="InterPro" id="IPR001911">
    <property type="entry name" value="Ribosomal_bS21"/>
</dbReference>
<dbReference type="InterPro" id="IPR018278">
    <property type="entry name" value="Ribosomal_bS21_CS"/>
</dbReference>
<dbReference type="InterPro" id="IPR038380">
    <property type="entry name" value="Ribosomal_bS21_sf"/>
</dbReference>
<dbReference type="NCBIfam" id="TIGR00030">
    <property type="entry name" value="S21p"/>
    <property type="match status" value="1"/>
</dbReference>
<dbReference type="PANTHER" id="PTHR21109">
    <property type="entry name" value="MITOCHONDRIAL 28S RIBOSOMAL PROTEIN S21"/>
    <property type="match status" value="1"/>
</dbReference>
<dbReference type="PANTHER" id="PTHR21109:SF0">
    <property type="entry name" value="SMALL RIBOSOMAL SUBUNIT PROTEIN BS21M"/>
    <property type="match status" value="1"/>
</dbReference>
<dbReference type="Pfam" id="PF01165">
    <property type="entry name" value="Ribosomal_S21"/>
    <property type="match status" value="1"/>
</dbReference>
<dbReference type="PRINTS" id="PR00976">
    <property type="entry name" value="RIBOSOMALS21"/>
</dbReference>
<dbReference type="PROSITE" id="PS01181">
    <property type="entry name" value="RIBOSOMAL_S21"/>
    <property type="match status" value="1"/>
</dbReference>
<evidence type="ECO:0000255" key="1">
    <source>
        <dbReference type="HAMAP-Rule" id="MF_00358"/>
    </source>
</evidence>
<evidence type="ECO:0000256" key="2">
    <source>
        <dbReference type="SAM" id="MobiDB-lite"/>
    </source>
</evidence>
<evidence type="ECO:0000305" key="3"/>
<keyword id="KW-0687">Ribonucleoprotein</keyword>
<keyword id="KW-0689">Ribosomal protein</keyword>
<sequence length="77" mass="9147">MQVLVRDNNVDQALRALKKKMQREGIFREMKMRGYYEKPSEKRAREKAEAIRRTRKLARKRAQREGIVSNGRTASVR</sequence>